<proteinExistence type="inferred from homology"/>
<accession>B8ZML9</accession>
<evidence type="ECO:0000255" key="1">
    <source>
        <dbReference type="HAMAP-Rule" id="MF_01318"/>
    </source>
</evidence>
<evidence type="ECO:0000305" key="2"/>
<comment type="function">
    <text evidence="1">Binds directly to 23S rRNA. The L1 stalk is quite mobile in the ribosome, and is involved in E site tRNA release.</text>
</comment>
<comment type="function">
    <text evidence="1">Protein L1 is also a translational repressor protein, it controls the translation of the L11 operon by binding to its mRNA.</text>
</comment>
<comment type="subunit">
    <text evidence="1">Part of the 50S ribosomal subunit.</text>
</comment>
<comment type="similarity">
    <text evidence="1">Belongs to the universal ribosomal protein uL1 family.</text>
</comment>
<gene>
    <name evidence="1" type="primary">rplA</name>
    <name type="ordered locus">SPN23F05700</name>
</gene>
<keyword id="KW-0678">Repressor</keyword>
<keyword id="KW-0687">Ribonucleoprotein</keyword>
<keyword id="KW-0689">Ribosomal protein</keyword>
<keyword id="KW-0694">RNA-binding</keyword>
<keyword id="KW-0699">rRNA-binding</keyword>
<keyword id="KW-0810">Translation regulation</keyword>
<keyword id="KW-0820">tRNA-binding</keyword>
<feature type="chain" id="PRO_1000165702" description="Large ribosomal subunit protein uL1">
    <location>
        <begin position="1"/>
        <end position="229"/>
    </location>
</feature>
<dbReference type="EMBL" id="FM211187">
    <property type="protein sequence ID" value="CAR68420.1"/>
    <property type="molecule type" value="Genomic_DNA"/>
</dbReference>
<dbReference type="RefSeq" id="WP_001085677.1">
    <property type="nucleotide sequence ID" value="NC_011900.1"/>
</dbReference>
<dbReference type="SMR" id="B8ZML9"/>
<dbReference type="KEGG" id="sne:SPN23F05700"/>
<dbReference type="HOGENOM" id="CLU_062853_0_0_9"/>
<dbReference type="GO" id="GO:0015934">
    <property type="term" value="C:large ribosomal subunit"/>
    <property type="evidence" value="ECO:0007669"/>
    <property type="project" value="InterPro"/>
</dbReference>
<dbReference type="GO" id="GO:0019843">
    <property type="term" value="F:rRNA binding"/>
    <property type="evidence" value="ECO:0007669"/>
    <property type="project" value="UniProtKB-UniRule"/>
</dbReference>
<dbReference type="GO" id="GO:0003735">
    <property type="term" value="F:structural constituent of ribosome"/>
    <property type="evidence" value="ECO:0007669"/>
    <property type="project" value="InterPro"/>
</dbReference>
<dbReference type="GO" id="GO:0000049">
    <property type="term" value="F:tRNA binding"/>
    <property type="evidence" value="ECO:0007669"/>
    <property type="project" value="UniProtKB-KW"/>
</dbReference>
<dbReference type="GO" id="GO:0006417">
    <property type="term" value="P:regulation of translation"/>
    <property type="evidence" value="ECO:0007669"/>
    <property type="project" value="UniProtKB-KW"/>
</dbReference>
<dbReference type="GO" id="GO:0006412">
    <property type="term" value="P:translation"/>
    <property type="evidence" value="ECO:0007669"/>
    <property type="project" value="UniProtKB-UniRule"/>
</dbReference>
<dbReference type="CDD" id="cd00403">
    <property type="entry name" value="Ribosomal_L1"/>
    <property type="match status" value="1"/>
</dbReference>
<dbReference type="FunFam" id="3.40.50.790:FF:000001">
    <property type="entry name" value="50S ribosomal protein L1"/>
    <property type="match status" value="1"/>
</dbReference>
<dbReference type="Gene3D" id="3.30.190.20">
    <property type="match status" value="1"/>
</dbReference>
<dbReference type="Gene3D" id="3.40.50.790">
    <property type="match status" value="1"/>
</dbReference>
<dbReference type="HAMAP" id="MF_01318_B">
    <property type="entry name" value="Ribosomal_uL1_B"/>
    <property type="match status" value="1"/>
</dbReference>
<dbReference type="InterPro" id="IPR005878">
    <property type="entry name" value="Ribosom_uL1_bac-type"/>
</dbReference>
<dbReference type="InterPro" id="IPR002143">
    <property type="entry name" value="Ribosomal_uL1"/>
</dbReference>
<dbReference type="InterPro" id="IPR023674">
    <property type="entry name" value="Ribosomal_uL1-like"/>
</dbReference>
<dbReference type="InterPro" id="IPR028364">
    <property type="entry name" value="Ribosomal_uL1/biogenesis"/>
</dbReference>
<dbReference type="InterPro" id="IPR016095">
    <property type="entry name" value="Ribosomal_uL1_3-a/b-sand"/>
</dbReference>
<dbReference type="InterPro" id="IPR023673">
    <property type="entry name" value="Ribosomal_uL1_CS"/>
</dbReference>
<dbReference type="NCBIfam" id="TIGR01169">
    <property type="entry name" value="rplA_bact"/>
    <property type="match status" value="1"/>
</dbReference>
<dbReference type="PANTHER" id="PTHR36427">
    <property type="entry name" value="54S RIBOSOMAL PROTEIN L1, MITOCHONDRIAL"/>
    <property type="match status" value="1"/>
</dbReference>
<dbReference type="PANTHER" id="PTHR36427:SF3">
    <property type="entry name" value="LARGE RIBOSOMAL SUBUNIT PROTEIN UL1M"/>
    <property type="match status" value="1"/>
</dbReference>
<dbReference type="Pfam" id="PF00687">
    <property type="entry name" value="Ribosomal_L1"/>
    <property type="match status" value="1"/>
</dbReference>
<dbReference type="PIRSF" id="PIRSF002155">
    <property type="entry name" value="Ribosomal_L1"/>
    <property type="match status" value="1"/>
</dbReference>
<dbReference type="SUPFAM" id="SSF56808">
    <property type="entry name" value="Ribosomal protein L1"/>
    <property type="match status" value="1"/>
</dbReference>
<dbReference type="PROSITE" id="PS01199">
    <property type="entry name" value="RIBOSOMAL_L1"/>
    <property type="match status" value="1"/>
</dbReference>
<protein>
    <recommendedName>
        <fullName evidence="1">Large ribosomal subunit protein uL1</fullName>
    </recommendedName>
    <alternativeName>
        <fullName evidence="2">50S ribosomal protein L1</fullName>
    </alternativeName>
</protein>
<sequence length="229" mass="24523">MAKKSKQLRAALEKIDSTKAYSVEEAVALAKETNFAKFDATVEVAYNLNIDVKKADQQIRGAMVLPNGTGKTSRVLVFARGAKAEEAKAAGADFVGEDDLVAKINDGWLDFDVVIATPDMMALVGRLGRVLGPRNLMPNPKTGTVTMDVAKAVEESKGGKITYRADRAGNVQAIIGKVSFEAEKLVENFKAFNETIQKVKPATAKGTYVTNLTITTTQGVGIKVDVNSL</sequence>
<name>RL1_STRPJ</name>
<reference key="1">
    <citation type="journal article" date="2009" name="J. Bacteriol.">
        <title>Role of conjugative elements in the evolution of the multidrug-resistant pandemic clone Streptococcus pneumoniae Spain23F ST81.</title>
        <authorList>
            <person name="Croucher N.J."/>
            <person name="Walker D."/>
            <person name="Romero P."/>
            <person name="Lennard N."/>
            <person name="Paterson G.K."/>
            <person name="Bason N.C."/>
            <person name="Mitchell A.M."/>
            <person name="Quail M.A."/>
            <person name="Andrew P.W."/>
            <person name="Parkhill J."/>
            <person name="Bentley S.D."/>
            <person name="Mitchell T.J."/>
        </authorList>
    </citation>
    <scope>NUCLEOTIDE SEQUENCE [LARGE SCALE GENOMIC DNA]</scope>
    <source>
        <strain>ATCC 700669 / Spain 23F-1</strain>
    </source>
</reference>
<organism>
    <name type="scientific">Streptococcus pneumoniae (strain ATCC 700669 / Spain 23F-1)</name>
    <dbReference type="NCBI Taxonomy" id="561276"/>
    <lineage>
        <taxon>Bacteria</taxon>
        <taxon>Bacillati</taxon>
        <taxon>Bacillota</taxon>
        <taxon>Bacilli</taxon>
        <taxon>Lactobacillales</taxon>
        <taxon>Streptococcaceae</taxon>
        <taxon>Streptococcus</taxon>
    </lineage>
</organism>